<evidence type="ECO:0000255" key="1">
    <source>
        <dbReference type="HAMAP-Rule" id="MF_00102"/>
    </source>
</evidence>
<evidence type="ECO:0000305" key="2"/>
<name>DAPB_YERPP</name>
<organism>
    <name type="scientific">Yersinia pestis (strain Pestoides F)</name>
    <dbReference type="NCBI Taxonomy" id="386656"/>
    <lineage>
        <taxon>Bacteria</taxon>
        <taxon>Pseudomonadati</taxon>
        <taxon>Pseudomonadota</taxon>
        <taxon>Gammaproteobacteria</taxon>
        <taxon>Enterobacterales</taxon>
        <taxon>Yersiniaceae</taxon>
        <taxon>Yersinia</taxon>
    </lineage>
</organism>
<sequence>MTDSTIRIAIVGAGGRMGRQLIQAVTQMEGVVLGAAIERKGSTLVGSDAGELAGVGLLNVIVGDDLSQLTDNFDVLIDFTRPEGTLEHLAICRQHRKAMVIGTTGFDEAGKAAISEAAADIGIVFAANFSVGVNVVLKLLEKAAKVMGDYTDIEIIEAHHRHKVDAPSGTALAMGEAIADAMGRSLKDCAVYSREGYTGERKPGTIGFATVRAGDIVGEHTAMFADIGERVEITHKATSRMTFAHGAVKSAIWLGKHDNGLFDMRDVLNLNEL</sequence>
<dbReference type="EC" id="1.17.1.8" evidence="1"/>
<dbReference type="EMBL" id="CP000668">
    <property type="protein sequence ID" value="ABP41511.1"/>
    <property type="molecule type" value="Genomic_DNA"/>
</dbReference>
<dbReference type="RefSeq" id="WP_002210504.1">
    <property type="nucleotide sequence ID" value="NZ_CP009715.1"/>
</dbReference>
<dbReference type="SMR" id="A4TQE9"/>
<dbReference type="GeneID" id="57974130"/>
<dbReference type="KEGG" id="ypp:YPDSF_3153"/>
<dbReference type="PATRIC" id="fig|386656.14.peg.1199"/>
<dbReference type="UniPathway" id="UPA00034">
    <property type="reaction ID" value="UER00018"/>
</dbReference>
<dbReference type="GO" id="GO:0005829">
    <property type="term" value="C:cytosol"/>
    <property type="evidence" value="ECO:0007669"/>
    <property type="project" value="TreeGrafter"/>
</dbReference>
<dbReference type="GO" id="GO:0008839">
    <property type="term" value="F:4-hydroxy-tetrahydrodipicolinate reductase"/>
    <property type="evidence" value="ECO:0007669"/>
    <property type="project" value="UniProtKB-EC"/>
</dbReference>
<dbReference type="GO" id="GO:0051287">
    <property type="term" value="F:NAD binding"/>
    <property type="evidence" value="ECO:0007669"/>
    <property type="project" value="UniProtKB-UniRule"/>
</dbReference>
<dbReference type="GO" id="GO:0050661">
    <property type="term" value="F:NADP binding"/>
    <property type="evidence" value="ECO:0007669"/>
    <property type="project" value="UniProtKB-UniRule"/>
</dbReference>
<dbReference type="GO" id="GO:0016726">
    <property type="term" value="F:oxidoreductase activity, acting on CH or CH2 groups, NAD or NADP as acceptor"/>
    <property type="evidence" value="ECO:0007669"/>
    <property type="project" value="UniProtKB-UniRule"/>
</dbReference>
<dbReference type="GO" id="GO:0019877">
    <property type="term" value="P:diaminopimelate biosynthetic process"/>
    <property type="evidence" value="ECO:0007669"/>
    <property type="project" value="UniProtKB-UniRule"/>
</dbReference>
<dbReference type="GO" id="GO:0009089">
    <property type="term" value="P:lysine biosynthetic process via diaminopimelate"/>
    <property type="evidence" value="ECO:0007669"/>
    <property type="project" value="UniProtKB-UniRule"/>
</dbReference>
<dbReference type="CDD" id="cd02274">
    <property type="entry name" value="DHDPR_N"/>
    <property type="match status" value="1"/>
</dbReference>
<dbReference type="FunFam" id="3.30.360.10:FF:000004">
    <property type="entry name" value="4-hydroxy-tetrahydrodipicolinate reductase"/>
    <property type="match status" value="1"/>
</dbReference>
<dbReference type="FunFam" id="3.40.50.720:FF:000048">
    <property type="entry name" value="4-hydroxy-tetrahydrodipicolinate reductase"/>
    <property type="match status" value="1"/>
</dbReference>
<dbReference type="Gene3D" id="3.30.360.10">
    <property type="entry name" value="Dihydrodipicolinate Reductase, domain 2"/>
    <property type="match status" value="1"/>
</dbReference>
<dbReference type="Gene3D" id="3.40.50.720">
    <property type="entry name" value="NAD(P)-binding Rossmann-like Domain"/>
    <property type="match status" value="1"/>
</dbReference>
<dbReference type="HAMAP" id="MF_00102">
    <property type="entry name" value="DapB"/>
    <property type="match status" value="1"/>
</dbReference>
<dbReference type="InterPro" id="IPR022663">
    <property type="entry name" value="DapB_C"/>
</dbReference>
<dbReference type="InterPro" id="IPR000846">
    <property type="entry name" value="DapB_N"/>
</dbReference>
<dbReference type="InterPro" id="IPR022664">
    <property type="entry name" value="DapB_N_CS"/>
</dbReference>
<dbReference type="InterPro" id="IPR023940">
    <property type="entry name" value="DHDPR_bac"/>
</dbReference>
<dbReference type="InterPro" id="IPR036291">
    <property type="entry name" value="NAD(P)-bd_dom_sf"/>
</dbReference>
<dbReference type="NCBIfam" id="TIGR00036">
    <property type="entry name" value="dapB"/>
    <property type="match status" value="1"/>
</dbReference>
<dbReference type="PANTHER" id="PTHR20836:SF0">
    <property type="entry name" value="4-HYDROXY-TETRAHYDRODIPICOLINATE REDUCTASE 1, CHLOROPLASTIC-RELATED"/>
    <property type="match status" value="1"/>
</dbReference>
<dbReference type="PANTHER" id="PTHR20836">
    <property type="entry name" value="DIHYDRODIPICOLINATE REDUCTASE"/>
    <property type="match status" value="1"/>
</dbReference>
<dbReference type="Pfam" id="PF05173">
    <property type="entry name" value="DapB_C"/>
    <property type="match status" value="1"/>
</dbReference>
<dbReference type="Pfam" id="PF01113">
    <property type="entry name" value="DapB_N"/>
    <property type="match status" value="1"/>
</dbReference>
<dbReference type="PIRSF" id="PIRSF000161">
    <property type="entry name" value="DHPR"/>
    <property type="match status" value="1"/>
</dbReference>
<dbReference type="SUPFAM" id="SSF55347">
    <property type="entry name" value="Glyceraldehyde-3-phosphate dehydrogenase-like, C-terminal domain"/>
    <property type="match status" value="1"/>
</dbReference>
<dbReference type="SUPFAM" id="SSF51735">
    <property type="entry name" value="NAD(P)-binding Rossmann-fold domains"/>
    <property type="match status" value="1"/>
</dbReference>
<dbReference type="PROSITE" id="PS01298">
    <property type="entry name" value="DAPB"/>
    <property type="match status" value="1"/>
</dbReference>
<gene>
    <name evidence="1" type="primary">dapB</name>
    <name type="ordered locus">YPDSF_3153</name>
</gene>
<keyword id="KW-0028">Amino-acid biosynthesis</keyword>
<keyword id="KW-0963">Cytoplasm</keyword>
<keyword id="KW-0220">Diaminopimelate biosynthesis</keyword>
<keyword id="KW-0457">Lysine biosynthesis</keyword>
<keyword id="KW-0520">NAD</keyword>
<keyword id="KW-0521">NADP</keyword>
<keyword id="KW-0560">Oxidoreductase</keyword>
<proteinExistence type="inferred from homology"/>
<protein>
    <recommendedName>
        <fullName evidence="1">4-hydroxy-tetrahydrodipicolinate reductase</fullName>
        <shortName evidence="1">HTPA reductase</shortName>
        <ecNumber evidence="1">1.17.1.8</ecNumber>
    </recommendedName>
</protein>
<feature type="chain" id="PRO_1000008665" description="4-hydroxy-tetrahydrodipicolinate reductase">
    <location>
        <begin position="1"/>
        <end position="273"/>
    </location>
</feature>
<feature type="active site" description="Proton donor/acceptor" evidence="1">
    <location>
        <position position="159"/>
    </location>
</feature>
<feature type="active site" description="Proton donor" evidence="1">
    <location>
        <position position="163"/>
    </location>
</feature>
<feature type="binding site" evidence="1">
    <location>
        <begin position="12"/>
        <end position="17"/>
    </location>
    <ligand>
        <name>NAD(+)</name>
        <dbReference type="ChEBI" id="CHEBI:57540"/>
    </ligand>
</feature>
<feature type="binding site" evidence="1">
    <location>
        <position position="38"/>
    </location>
    <ligand>
        <name>NAD(+)</name>
        <dbReference type="ChEBI" id="CHEBI:57540"/>
    </ligand>
</feature>
<feature type="binding site" evidence="1">
    <location>
        <position position="39"/>
    </location>
    <ligand>
        <name>NADP(+)</name>
        <dbReference type="ChEBI" id="CHEBI:58349"/>
    </ligand>
</feature>
<feature type="binding site" evidence="1">
    <location>
        <begin position="102"/>
        <end position="104"/>
    </location>
    <ligand>
        <name>NAD(+)</name>
        <dbReference type="ChEBI" id="CHEBI:57540"/>
    </ligand>
</feature>
<feature type="binding site" evidence="1">
    <location>
        <begin position="126"/>
        <end position="129"/>
    </location>
    <ligand>
        <name>NAD(+)</name>
        <dbReference type="ChEBI" id="CHEBI:57540"/>
    </ligand>
</feature>
<feature type="binding site" evidence="1">
    <location>
        <position position="160"/>
    </location>
    <ligand>
        <name>(S)-2,3,4,5-tetrahydrodipicolinate</name>
        <dbReference type="ChEBI" id="CHEBI:16845"/>
    </ligand>
</feature>
<feature type="binding site" evidence="1">
    <location>
        <begin position="169"/>
        <end position="170"/>
    </location>
    <ligand>
        <name>(S)-2,3,4,5-tetrahydrodipicolinate</name>
        <dbReference type="ChEBI" id="CHEBI:16845"/>
    </ligand>
</feature>
<accession>A4TQE9</accession>
<comment type="function">
    <text evidence="1">Catalyzes the conversion of 4-hydroxy-tetrahydrodipicolinate (HTPA) to tetrahydrodipicolinate.</text>
</comment>
<comment type="catalytic activity">
    <reaction evidence="1">
        <text>(S)-2,3,4,5-tetrahydrodipicolinate + NAD(+) + H2O = (2S,4S)-4-hydroxy-2,3,4,5-tetrahydrodipicolinate + NADH + H(+)</text>
        <dbReference type="Rhea" id="RHEA:35323"/>
        <dbReference type="ChEBI" id="CHEBI:15377"/>
        <dbReference type="ChEBI" id="CHEBI:15378"/>
        <dbReference type="ChEBI" id="CHEBI:16845"/>
        <dbReference type="ChEBI" id="CHEBI:57540"/>
        <dbReference type="ChEBI" id="CHEBI:57945"/>
        <dbReference type="ChEBI" id="CHEBI:67139"/>
        <dbReference type="EC" id="1.17.1.8"/>
    </reaction>
</comment>
<comment type="catalytic activity">
    <reaction evidence="1">
        <text>(S)-2,3,4,5-tetrahydrodipicolinate + NADP(+) + H2O = (2S,4S)-4-hydroxy-2,3,4,5-tetrahydrodipicolinate + NADPH + H(+)</text>
        <dbReference type="Rhea" id="RHEA:35331"/>
        <dbReference type="ChEBI" id="CHEBI:15377"/>
        <dbReference type="ChEBI" id="CHEBI:15378"/>
        <dbReference type="ChEBI" id="CHEBI:16845"/>
        <dbReference type="ChEBI" id="CHEBI:57783"/>
        <dbReference type="ChEBI" id="CHEBI:58349"/>
        <dbReference type="ChEBI" id="CHEBI:67139"/>
        <dbReference type="EC" id="1.17.1.8"/>
    </reaction>
</comment>
<comment type="pathway">
    <text evidence="1">Amino-acid biosynthesis; L-lysine biosynthesis via DAP pathway; (S)-tetrahydrodipicolinate from L-aspartate: step 4/4.</text>
</comment>
<comment type="subunit">
    <text evidence="1">Homotetramer.</text>
</comment>
<comment type="subcellular location">
    <subcellularLocation>
        <location evidence="1">Cytoplasm</location>
    </subcellularLocation>
</comment>
<comment type="similarity">
    <text evidence="1">Belongs to the DapB family.</text>
</comment>
<comment type="caution">
    <text evidence="2">Was originally thought to be a dihydrodipicolinate reductase (DHDPR), catalyzing the conversion of dihydrodipicolinate to tetrahydrodipicolinate. However, it was shown in E.coli that the substrate of the enzymatic reaction is not dihydrodipicolinate (DHDP) but in fact (2S,4S)-4-hydroxy-2,3,4,5-tetrahydrodipicolinic acid (HTPA), the product released by the DapA-catalyzed reaction.</text>
</comment>
<reference key="1">
    <citation type="submission" date="2007-02" db="EMBL/GenBank/DDBJ databases">
        <title>Complete sequence of chromosome of Yersinia pestis Pestoides F.</title>
        <authorList>
            <consortium name="US DOE Joint Genome Institute"/>
            <person name="Copeland A."/>
            <person name="Lucas S."/>
            <person name="Lapidus A."/>
            <person name="Barry K."/>
            <person name="Detter J.C."/>
            <person name="Glavina del Rio T."/>
            <person name="Hammon N."/>
            <person name="Israni S."/>
            <person name="Dalin E."/>
            <person name="Tice H."/>
            <person name="Pitluck S."/>
            <person name="Di Bartolo G."/>
            <person name="Chain P."/>
            <person name="Malfatti S."/>
            <person name="Shin M."/>
            <person name="Vergez L."/>
            <person name="Schmutz J."/>
            <person name="Larimer F."/>
            <person name="Land M."/>
            <person name="Hauser L."/>
            <person name="Worsham P."/>
            <person name="Chu M."/>
            <person name="Bearden S."/>
            <person name="Garcia E."/>
            <person name="Richardson P."/>
        </authorList>
    </citation>
    <scope>NUCLEOTIDE SEQUENCE [LARGE SCALE GENOMIC DNA]</scope>
    <source>
        <strain>Pestoides F</strain>
    </source>
</reference>